<proteinExistence type="inferred from homology"/>
<sequence>MGQKVNPVGMRIGITRDWTSNWYADKKDFADRLNEDLNVRQLLQKRLKGAAVSRIQIERPARNAKIIIHSARPGVIIGKKGGEIEALRDEISKVMKVPVHITIEEVRKPELDAKLVAENIAQQLERRVMFRRAMKRAVQNTLRQGALGVKISVSGRLGGAEIARTEWYREGRVPLHTFRADIDYATASAKTTYGIIGVKVWIFKGEVHAPKPQAEEAAPQETEEEVK</sequence>
<comment type="function">
    <text evidence="1">Binds the lower part of the 30S subunit head. Binds mRNA in the 70S ribosome, positioning it for translation.</text>
</comment>
<comment type="subunit">
    <text evidence="1">Part of the 30S ribosomal subunit. Forms a tight complex with proteins S10 and S14.</text>
</comment>
<comment type="similarity">
    <text evidence="1">Belongs to the universal ribosomal protein uS3 family.</text>
</comment>
<keyword id="KW-0687">Ribonucleoprotein</keyword>
<keyword id="KW-0689">Ribosomal protein</keyword>
<keyword id="KW-0694">RNA-binding</keyword>
<keyword id="KW-0699">rRNA-binding</keyword>
<accession>B6J257</accession>
<gene>
    <name evidence="1" type="primary">rpsC</name>
    <name type="ordered locus">CbuG_1761</name>
</gene>
<reference key="1">
    <citation type="journal article" date="2009" name="Infect. Immun.">
        <title>Comparative genomics reveal extensive transposon-mediated genomic plasticity and diversity among potential effector proteins within the genus Coxiella.</title>
        <authorList>
            <person name="Beare P.A."/>
            <person name="Unsworth N."/>
            <person name="Andoh M."/>
            <person name="Voth D.E."/>
            <person name="Omsland A."/>
            <person name="Gilk S.D."/>
            <person name="Williams K.P."/>
            <person name="Sobral B.W."/>
            <person name="Kupko J.J. III"/>
            <person name="Porcella S.F."/>
            <person name="Samuel J.E."/>
            <person name="Heinzen R.A."/>
        </authorList>
    </citation>
    <scope>NUCLEOTIDE SEQUENCE [LARGE SCALE GENOMIC DNA]</scope>
    <source>
        <strain>CbuG_Q212</strain>
    </source>
</reference>
<feature type="chain" id="PRO_1000140950" description="Small ribosomal subunit protein uS3">
    <location>
        <begin position="1"/>
        <end position="227"/>
    </location>
</feature>
<feature type="domain" description="KH type-2" evidence="1">
    <location>
        <begin position="39"/>
        <end position="107"/>
    </location>
</feature>
<protein>
    <recommendedName>
        <fullName evidence="1">Small ribosomal subunit protein uS3</fullName>
    </recommendedName>
    <alternativeName>
        <fullName evidence="2">30S ribosomal protein S3</fullName>
    </alternativeName>
</protein>
<evidence type="ECO:0000255" key="1">
    <source>
        <dbReference type="HAMAP-Rule" id="MF_01309"/>
    </source>
</evidence>
<evidence type="ECO:0000305" key="2"/>
<name>RS3_COXB2</name>
<dbReference type="EMBL" id="CP001019">
    <property type="protein sequence ID" value="ACJ19035.1"/>
    <property type="molecule type" value="Genomic_DNA"/>
</dbReference>
<dbReference type="RefSeq" id="WP_005771534.1">
    <property type="nucleotide sequence ID" value="NC_011527.1"/>
</dbReference>
<dbReference type="SMR" id="B6J257"/>
<dbReference type="KEGG" id="cbg:CbuG_1761"/>
<dbReference type="HOGENOM" id="CLU_058591_0_2_6"/>
<dbReference type="GO" id="GO:0022627">
    <property type="term" value="C:cytosolic small ribosomal subunit"/>
    <property type="evidence" value="ECO:0007669"/>
    <property type="project" value="TreeGrafter"/>
</dbReference>
<dbReference type="GO" id="GO:0003729">
    <property type="term" value="F:mRNA binding"/>
    <property type="evidence" value="ECO:0007669"/>
    <property type="project" value="UniProtKB-UniRule"/>
</dbReference>
<dbReference type="GO" id="GO:0019843">
    <property type="term" value="F:rRNA binding"/>
    <property type="evidence" value="ECO:0007669"/>
    <property type="project" value="UniProtKB-UniRule"/>
</dbReference>
<dbReference type="GO" id="GO:0003735">
    <property type="term" value="F:structural constituent of ribosome"/>
    <property type="evidence" value="ECO:0007669"/>
    <property type="project" value="InterPro"/>
</dbReference>
<dbReference type="GO" id="GO:0006412">
    <property type="term" value="P:translation"/>
    <property type="evidence" value="ECO:0007669"/>
    <property type="project" value="UniProtKB-UniRule"/>
</dbReference>
<dbReference type="CDD" id="cd02412">
    <property type="entry name" value="KH-II_30S_S3"/>
    <property type="match status" value="1"/>
</dbReference>
<dbReference type="FunFam" id="3.30.1140.32:FF:000001">
    <property type="entry name" value="30S ribosomal protein S3"/>
    <property type="match status" value="1"/>
</dbReference>
<dbReference type="FunFam" id="3.30.300.20:FF:000001">
    <property type="entry name" value="30S ribosomal protein S3"/>
    <property type="match status" value="1"/>
</dbReference>
<dbReference type="Gene3D" id="3.30.300.20">
    <property type="match status" value="1"/>
</dbReference>
<dbReference type="Gene3D" id="3.30.1140.32">
    <property type="entry name" value="Ribosomal protein S3, C-terminal domain"/>
    <property type="match status" value="1"/>
</dbReference>
<dbReference type="HAMAP" id="MF_01309_B">
    <property type="entry name" value="Ribosomal_uS3_B"/>
    <property type="match status" value="1"/>
</dbReference>
<dbReference type="InterPro" id="IPR004087">
    <property type="entry name" value="KH_dom"/>
</dbReference>
<dbReference type="InterPro" id="IPR015946">
    <property type="entry name" value="KH_dom-like_a/b"/>
</dbReference>
<dbReference type="InterPro" id="IPR004044">
    <property type="entry name" value="KH_dom_type_2"/>
</dbReference>
<dbReference type="InterPro" id="IPR009019">
    <property type="entry name" value="KH_sf_prok-type"/>
</dbReference>
<dbReference type="InterPro" id="IPR036419">
    <property type="entry name" value="Ribosomal_S3_C_sf"/>
</dbReference>
<dbReference type="InterPro" id="IPR005704">
    <property type="entry name" value="Ribosomal_uS3_bac-typ"/>
</dbReference>
<dbReference type="InterPro" id="IPR001351">
    <property type="entry name" value="Ribosomal_uS3_C"/>
</dbReference>
<dbReference type="InterPro" id="IPR018280">
    <property type="entry name" value="Ribosomal_uS3_CS"/>
</dbReference>
<dbReference type="NCBIfam" id="TIGR01009">
    <property type="entry name" value="rpsC_bact"/>
    <property type="match status" value="1"/>
</dbReference>
<dbReference type="PANTHER" id="PTHR11760">
    <property type="entry name" value="30S/40S RIBOSOMAL PROTEIN S3"/>
    <property type="match status" value="1"/>
</dbReference>
<dbReference type="PANTHER" id="PTHR11760:SF19">
    <property type="entry name" value="SMALL RIBOSOMAL SUBUNIT PROTEIN US3C"/>
    <property type="match status" value="1"/>
</dbReference>
<dbReference type="Pfam" id="PF07650">
    <property type="entry name" value="KH_2"/>
    <property type="match status" value="1"/>
</dbReference>
<dbReference type="Pfam" id="PF00189">
    <property type="entry name" value="Ribosomal_S3_C"/>
    <property type="match status" value="1"/>
</dbReference>
<dbReference type="SMART" id="SM00322">
    <property type="entry name" value="KH"/>
    <property type="match status" value="1"/>
</dbReference>
<dbReference type="SUPFAM" id="SSF54814">
    <property type="entry name" value="Prokaryotic type KH domain (KH-domain type II)"/>
    <property type="match status" value="1"/>
</dbReference>
<dbReference type="SUPFAM" id="SSF54821">
    <property type="entry name" value="Ribosomal protein S3 C-terminal domain"/>
    <property type="match status" value="1"/>
</dbReference>
<dbReference type="PROSITE" id="PS50823">
    <property type="entry name" value="KH_TYPE_2"/>
    <property type="match status" value="1"/>
</dbReference>
<dbReference type="PROSITE" id="PS00548">
    <property type="entry name" value="RIBOSOMAL_S3"/>
    <property type="match status" value="1"/>
</dbReference>
<organism>
    <name type="scientific">Coxiella burnetii (strain CbuG_Q212)</name>
    <name type="common">Coxiella burnetii (strain Q212)</name>
    <dbReference type="NCBI Taxonomy" id="434923"/>
    <lineage>
        <taxon>Bacteria</taxon>
        <taxon>Pseudomonadati</taxon>
        <taxon>Pseudomonadota</taxon>
        <taxon>Gammaproteobacteria</taxon>
        <taxon>Legionellales</taxon>
        <taxon>Coxiellaceae</taxon>
        <taxon>Coxiella</taxon>
    </lineage>
</organism>